<reference key="1">
    <citation type="journal article" date="2006" name="J. Bacteriol.">
        <title>The genome sequence of the obligately chemolithoautotrophic, facultatively anaerobic bacterium Thiobacillus denitrificans.</title>
        <authorList>
            <person name="Beller H.R."/>
            <person name="Chain P.S."/>
            <person name="Letain T.E."/>
            <person name="Chakicherla A."/>
            <person name="Larimer F.W."/>
            <person name="Richardson P.M."/>
            <person name="Coleman M.A."/>
            <person name="Wood A.P."/>
            <person name="Kelly D.P."/>
        </authorList>
    </citation>
    <scope>NUCLEOTIDE SEQUENCE [LARGE SCALE GENOMIC DNA]</scope>
    <source>
        <strain>ATCC 25259 / T1</strain>
    </source>
</reference>
<organism>
    <name type="scientific">Thiobacillus denitrificans (strain ATCC 25259 / T1)</name>
    <dbReference type="NCBI Taxonomy" id="292415"/>
    <lineage>
        <taxon>Bacteria</taxon>
        <taxon>Pseudomonadati</taxon>
        <taxon>Pseudomonadota</taxon>
        <taxon>Betaproteobacteria</taxon>
        <taxon>Nitrosomonadales</taxon>
        <taxon>Thiobacillaceae</taxon>
        <taxon>Thiobacillus</taxon>
    </lineage>
</organism>
<accession>Q3SM68</accession>
<comment type="catalytic activity">
    <reaction evidence="1">
        <text>2-(N(omega)-L-arginino)succinate = fumarate + L-arginine</text>
        <dbReference type="Rhea" id="RHEA:24020"/>
        <dbReference type="ChEBI" id="CHEBI:29806"/>
        <dbReference type="ChEBI" id="CHEBI:32682"/>
        <dbReference type="ChEBI" id="CHEBI:57472"/>
        <dbReference type="EC" id="4.3.2.1"/>
    </reaction>
</comment>
<comment type="pathway">
    <text evidence="1">Amino-acid biosynthesis; L-arginine biosynthesis; L-arginine from L-ornithine and carbamoyl phosphate: step 3/3.</text>
</comment>
<comment type="subcellular location">
    <subcellularLocation>
        <location evidence="1">Cytoplasm</location>
    </subcellularLocation>
</comment>
<comment type="similarity">
    <text evidence="1">Belongs to the lyase 1 family. Argininosuccinate lyase subfamily.</text>
</comment>
<evidence type="ECO:0000255" key="1">
    <source>
        <dbReference type="HAMAP-Rule" id="MF_00006"/>
    </source>
</evidence>
<name>ARLY_THIDA</name>
<protein>
    <recommendedName>
        <fullName evidence="1">Argininosuccinate lyase</fullName>
        <shortName evidence="1">ASAL</shortName>
        <ecNumber evidence="1">4.3.2.1</ecNumber>
    </recommendedName>
    <alternativeName>
        <fullName evidence="1">Arginosuccinase</fullName>
    </alternativeName>
</protein>
<gene>
    <name evidence="1" type="primary">argH</name>
    <name type="ordered locus">Tbd_0229</name>
</gene>
<keyword id="KW-0028">Amino-acid biosynthesis</keyword>
<keyword id="KW-0055">Arginine biosynthesis</keyword>
<keyword id="KW-0963">Cytoplasm</keyword>
<keyword id="KW-0456">Lyase</keyword>
<keyword id="KW-1185">Reference proteome</keyword>
<feature type="chain" id="PRO_0000240787" description="Argininosuccinate lyase">
    <location>
        <begin position="1"/>
        <end position="463"/>
    </location>
</feature>
<sequence>MSTSSTPPQGAWSGRFSEPVSEIVKRYTASIPFDYRLAEFDIQGSLAHAAMLHHVGVLSADDLAAIRGGMGELLEEIRAGRFAWSLDKEDVHLNIEAALTAKIGDAGKRLHTGRSRNDQVATDIRLYLRDAIDRILAGLKACQTSLVDLAEAHADTVMPGFTHLQVAQPVTFGHHLLAYFEMLARDAERMADCRRRVNRLPLGAAALAGTSYPIDRAYVARELGFEAVCENSLDAVSDRDFAIEFAAAAALVMTHLSRLSEELILWMSPRFGFIDLADRFCTGSSIMPQKKNPDVPELVRGKTGRVNGHLVALLTLMKGQPLAYNKDNQEDKEPLFDTVDTLADTLAIYADMLRGVTVKPDAMHAAVMQGFATATDLADYLVKKGLPFRDAHEVVARAVRVADESGRDLADLPLDELQTFSPIIGDDVYALLTLEGSLAARDHFGGTAPAQVRAAVARARGRL</sequence>
<proteinExistence type="inferred from homology"/>
<dbReference type="EC" id="4.3.2.1" evidence="1"/>
<dbReference type="EMBL" id="CP000116">
    <property type="protein sequence ID" value="AAZ96182.1"/>
    <property type="molecule type" value="Genomic_DNA"/>
</dbReference>
<dbReference type="RefSeq" id="WP_011310742.1">
    <property type="nucleotide sequence ID" value="NC_007404.1"/>
</dbReference>
<dbReference type="SMR" id="Q3SM68"/>
<dbReference type="STRING" id="292415.Tbd_0229"/>
<dbReference type="KEGG" id="tbd:Tbd_0229"/>
<dbReference type="eggNOG" id="COG0165">
    <property type="taxonomic scope" value="Bacteria"/>
</dbReference>
<dbReference type="HOGENOM" id="CLU_027272_2_3_4"/>
<dbReference type="OrthoDB" id="9769623at2"/>
<dbReference type="UniPathway" id="UPA00068">
    <property type="reaction ID" value="UER00114"/>
</dbReference>
<dbReference type="Proteomes" id="UP000008291">
    <property type="component" value="Chromosome"/>
</dbReference>
<dbReference type="GO" id="GO:0005829">
    <property type="term" value="C:cytosol"/>
    <property type="evidence" value="ECO:0007669"/>
    <property type="project" value="TreeGrafter"/>
</dbReference>
<dbReference type="GO" id="GO:0004056">
    <property type="term" value="F:argininosuccinate lyase activity"/>
    <property type="evidence" value="ECO:0007669"/>
    <property type="project" value="UniProtKB-UniRule"/>
</dbReference>
<dbReference type="GO" id="GO:0042450">
    <property type="term" value="P:arginine biosynthetic process via ornithine"/>
    <property type="evidence" value="ECO:0007669"/>
    <property type="project" value="InterPro"/>
</dbReference>
<dbReference type="GO" id="GO:0006526">
    <property type="term" value="P:L-arginine biosynthetic process"/>
    <property type="evidence" value="ECO:0007669"/>
    <property type="project" value="UniProtKB-UniRule"/>
</dbReference>
<dbReference type="CDD" id="cd01359">
    <property type="entry name" value="Argininosuccinate_lyase"/>
    <property type="match status" value="1"/>
</dbReference>
<dbReference type="FunFam" id="1.10.275.10:FF:000002">
    <property type="entry name" value="Argininosuccinate lyase"/>
    <property type="match status" value="1"/>
</dbReference>
<dbReference type="FunFam" id="1.10.40.30:FF:000001">
    <property type="entry name" value="Argininosuccinate lyase"/>
    <property type="match status" value="1"/>
</dbReference>
<dbReference type="FunFam" id="1.20.200.10:FF:000015">
    <property type="entry name" value="argininosuccinate lyase isoform X2"/>
    <property type="match status" value="1"/>
</dbReference>
<dbReference type="Gene3D" id="1.10.40.30">
    <property type="entry name" value="Fumarase/aspartase (C-terminal domain)"/>
    <property type="match status" value="1"/>
</dbReference>
<dbReference type="Gene3D" id="1.20.200.10">
    <property type="entry name" value="Fumarase/aspartase (Central domain)"/>
    <property type="match status" value="1"/>
</dbReference>
<dbReference type="Gene3D" id="1.10.275.10">
    <property type="entry name" value="Fumarase/aspartase (N-terminal domain)"/>
    <property type="match status" value="1"/>
</dbReference>
<dbReference type="HAMAP" id="MF_00006">
    <property type="entry name" value="Arg_succ_lyase"/>
    <property type="match status" value="1"/>
</dbReference>
<dbReference type="InterPro" id="IPR029419">
    <property type="entry name" value="Arg_succ_lyase_C"/>
</dbReference>
<dbReference type="InterPro" id="IPR009049">
    <property type="entry name" value="Argininosuccinate_lyase"/>
</dbReference>
<dbReference type="InterPro" id="IPR024083">
    <property type="entry name" value="Fumarase/histidase_N"/>
</dbReference>
<dbReference type="InterPro" id="IPR020557">
    <property type="entry name" value="Fumarate_lyase_CS"/>
</dbReference>
<dbReference type="InterPro" id="IPR000362">
    <property type="entry name" value="Fumarate_lyase_fam"/>
</dbReference>
<dbReference type="InterPro" id="IPR022761">
    <property type="entry name" value="Fumarate_lyase_N"/>
</dbReference>
<dbReference type="InterPro" id="IPR008948">
    <property type="entry name" value="L-Aspartase-like"/>
</dbReference>
<dbReference type="NCBIfam" id="TIGR00838">
    <property type="entry name" value="argH"/>
    <property type="match status" value="1"/>
</dbReference>
<dbReference type="PANTHER" id="PTHR43814">
    <property type="entry name" value="ARGININOSUCCINATE LYASE"/>
    <property type="match status" value="1"/>
</dbReference>
<dbReference type="PANTHER" id="PTHR43814:SF1">
    <property type="entry name" value="ARGININOSUCCINATE LYASE"/>
    <property type="match status" value="1"/>
</dbReference>
<dbReference type="Pfam" id="PF14698">
    <property type="entry name" value="ASL_C2"/>
    <property type="match status" value="1"/>
</dbReference>
<dbReference type="Pfam" id="PF00206">
    <property type="entry name" value="Lyase_1"/>
    <property type="match status" value="1"/>
</dbReference>
<dbReference type="PRINTS" id="PR00145">
    <property type="entry name" value="ARGSUCLYASE"/>
</dbReference>
<dbReference type="PRINTS" id="PR00149">
    <property type="entry name" value="FUMRATELYASE"/>
</dbReference>
<dbReference type="SUPFAM" id="SSF48557">
    <property type="entry name" value="L-aspartase-like"/>
    <property type="match status" value="1"/>
</dbReference>
<dbReference type="PROSITE" id="PS00163">
    <property type="entry name" value="FUMARATE_LYASES"/>
    <property type="match status" value="1"/>
</dbReference>